<evidence type="ECO:0000305" key="1"/>
<reference key="1">
    <citation type="journal article" date="1995" name="Plant Mol. Biol. Rep.">
        <title>The chloroplast genome of a chlorophyll a+c-containing alga, Odontella sinensis.</title>
        <authorList>
            <person name="Kowallik K.V."/>
            <person name="Stoebe B."/>
            <person name="Schaffran I."/>
            <person name="Kroth-Pancic P."/>
            <person name="Freier U."/>
        </authorList>
    </citation>
    <scope>NUCLEOTIDE SEQUENCE [LARGE SCALE GENOMIC DNA]</scope>
</reference>
<feature type="chain" id="PRO_0000163586" description="Large ribosomal subunit protein bL19c">
    <location>
        <begin position="1"/>
        <end position="120"/>
    </location>
</feature>
<geneLocation type="chloroplast"/>
<name>RK19_TRICV</name>
<gene>
    <name type="primary">rpl19</name>
</gene>
<sequence>MLSLNTQKTIDNLHNVFTKKNIPPIRIGDNVKVGVRIIEGNKERVQFYEGTVIAKKNSSINTTLTVRKVLQGIGVERIFLIHSPKVDSIEVLRSSKVRRSKLYYLRNLKGKASRLKQQFR</sequence>
<protein>
    <recommendedName>
        <fullName evidence="1">Large ribosomal subunit protein bL19c</fullName>
    </recommendedName>
    <alternativeName>
        <fullName>50S ribosomal protein L19, chloroplastic</fullName>
    </alternativeName>
</protein>
<keyword id="KW-0150">Chloroplast</keyword>
<keyword id="KW-0934">Plastid</keyword>
<keyword id="KW-0687">Ribonucleoprotein</keyword>
<keyword id="KW-0689">Ribosomal protein</keyword>
<comment type="subcellular location">
    <subcellularLocation>
        <location>Plastid</location>
        <location>Chloroplast</location>
    </subcellularLocation>
</comment>
<comment type="similarity">
    <text evidence="1">Belongs to the bacterial ribosomal protein bL19 family.</text>
</comment>
<organism>
    <name type="scientific">Trieres chinensis</name>
    <name type="common">Marine centric diatom</name>
    <name type="synonym">Odontella sinensis</name>
    <dbReference type="NCBI Taxonomy" id="1514140"/>
    <lineage>
        <taxon>Eukaryota</taxon>
        <taxon>Sar</taxon>
        <taxon>Stramenopiles</taxon>
        <taxon>Ochrophyta</taxon>
        <taxon>Bacillariophyta</taxon>
        <taxon>Mediophyceae</taxon>
        <taxon>Biddulphiophycidae</taxon>
        <taxon>Eupodiscales</taxon>
        <taxon>Parodontellaceae</taxon>
        <taxon>Trieres</taxon>
    </lineage>
</organism>
<proteinExistence type="inferred from homology"/>
<dbReference type="EMBL" id="Z67753">
    <property type="protein sequence ID" value="CAA91734.1"/>
    <property type="molecule type" value="Genomic_DNA"/>
</dbReference>
<dbReference type="PIR" id="S78361">
    <property type="entry name" value="S78361"/>
</dbReference>
<dbReference type="RefSeq" id="NP_043702.1">
    <property type="nucleotide sequence ID" value="NC_001713.1"/>
</dbReference>
<dbReference type="SMR" id="P49555"/>
<dbReference type="GeneID" id="801819"/>
<dbReference type="GO" id="GO:0009507">
    <property type="term" value="C:chloroplast"/>
    <property type="evidence" value="ECO:0007669"/>
    <property type="project" value="UniProtKB-SubCell"/>
</dbReference>
<dbReference type="GO" id="GO:0005762">
    <property type="term" value="C:mitochondrial large ribosomal subunit"/>
    <property type="evidence" value="ECO:0007669"/>
    <property type="project" value="TreeGrafter"/>
</dbReference>
<dbReference type="GO" id="GO:0003735">
    <property type="term" value="F:structural constituent of ribosome"/>
    <property type="evidence" value="ECO:0007669"/>
    <property type="project" value="InterPro"/>
</dbReference>
<dbReference type="GO" id="GO:0006412">
    <property type="term" value="P:translation"/>
    <property type="evidence" value="ECO:0007669"/>
    <property type="project" value="UniProtKB-UniRule"/>
</dbReference>
<dbReference type="FunFam" id="2.30.30.790:FF:000004">
    <property type="entry name" value="50S ribosomal protein L19, chloroplastic"/>
    <property type="match status" value="1"/>
</dbReference>
<dbReference type="Gene3D" id="2.30.30.790">
    <property type="match status" value="1"/>
</dbReference>
<dbReference type="HAMAP" id="MF_00402">
    <property type="entry name" value="Ribosomal_bL19"/>
    <property type="match status" value="1"/>
</dbReference>
<dbReference type="InterPro" id="IPR001857">
    <property type="entry name" value="Ribosomal_bL19"/>
</dbReference>
<dbReference type="InterPro" id="IPR018257">
    <property type="entry name" value="Ribosomal_bL19_CS"/>
</dbReference>
<dbReference type="InterPro" id="IPR038657">
    <property type="entry name" value="Ribosomal_bL19_sf"/>
</dbReference>
<dbReference type="InterPro" id="IPR008991">
    <property type="entry name" value="Translation_prot_SH3-like_sf"/>
</dbReference>
<dbReference type="NCBIfam" id="TIGR01024">
    <property type="entry name" value="rplS_bact"/>
    <property type="match status" value="1"/>
</dbReference>
<dbReference type="PANTHER" id="PTHR15680:SF9">
    <property type="entry name" value="LARGE RIBOSOMAL SUBUNIT PROTEIN BL19M"/>
    <property type="match status" value="1"/>
</dbReference>
<dbReference type="PANTHER" id="PTHR15680">
    <property type="entry name" value="RIBOSOMAL PROTEIN L19"/>
    <property type="match status" value="1"/>
</dbReference>
<dbReference type="Pfam" id="PF01245">
    <property type="entry name" value="Ribosomal_L19"/>
    <property type="match status" value="1"/>
</dbReference>
<dbReference type="PIRSF" id="PIRSF002191">
    <property type="entry name" value="Ribosomal_L19"/>
    <property type="match status" value="1"/>
</dbReference>
<dbReference type="PRINTS" id="PR00061">
    <property type="entry name" value="RIBOSOMALL19"/>
</dbReference>
<dbReference type="SUPFAM" id="SSF50104">
    <property type="entry name" value="Translation proteins SH3-like domain"/>
    <property type="match status" value="1"/>
</dbReference>
<dbReference type="PROSITE" id="PS01015">
    <property type="entry name" value="RIBOSOMAL_L19"/>
    <property type="match status" value="1"/>
</dbReference>
<accession>P49555</accession>